<dbReference type="EC" id="2.7.7.89" evidence="1"/>
<dbReference type="EC" id="2.7.7.42" evidence="1"/>
<dbReference type="EMBL" id="AP006618">
    <property type="protein sequence ID" value="BAD56507.1"/>
    <property type="molecule type" value="Genomic_DNA"/>
</dbReference>
<dbReference type="RefSeq" id="WP_011208192.1">
    <property type="nucleotide sequence ID" value="NC_006361.1"/>
</dbReference>
<dbReference type="SMR" id="Q5YZ84"/>
<dbReference type="STRING" id="247156.NFA_16610"/>
<dbReference type="GeneID" id="61132447"/>
<dbReference type="KEGG" id="nfa:NFA_16610"/>
<dbReference type="eggNOG" id="COG1391">
    <property type="taxonomic scope" value="Bacteria"/>
</dbReference>
<dbReference type="HOGENOM" id="CLU_006233_1_0_11"/>
<dbReference type="OrthoDB" id="9759366at2"/>
<dbReference type="Proteomes" id="UP000006820">
    <property type="component" value="Chromosome"/>
</dbReference>
<dbReference type="GO" id="GO:0005829">
    <property type="term" value="C:cytosol"/>
    <property type="evidence" value="ECO:0007669"/>
    <property type="project" value="TreeGrafter"/>
</dbReference>
<dbReference type="GO" id="GO:0008882">
    <property type="term" value="F:[glutamate-ammonia-ligase] adenylyltransferase activity"/>
    <property type="evidence" value="ECO:0007669"/>
    <property type="project" value="UniProtKB-UniRule"/>
</dbReference>
<dbReference type="GO" id="GO:0047388">
    <property type="term" value="F:[glutamine synthetase]-adenylyl-L-tyrosine phosphorylase activity"/>
    <property type="evidence" value="ECO:0007669"/>
    <property type="project" value="UniProtKB-EC"/>
</dbReference>
<dbReference type="GO" id="GO:0005524">
    <property type="term" value="F:ATP binding"/>
    <property type="evidence" value="ECO:0007669"/>
    <property type="project" value="UniProtKB-UniRule"/>
</dbReference>
<dbReference type="GO" id="GO:0000287">
    <property type="term" value="F:magnesium ion binding"/>
    <property type="evidence" value="ECO:0007669"/>
    <property type="project" value="UniProtKB-UniRule"/>
</dbReference>
<dbReference type="GO" id="GO:0000820">
    <property type="term" value="P:regulation of glutamine family amino acid metabolic process"/>
    <property type="evidence" value="ECO:0007669"/>
    <property type="project" value="UniProtKB-UniRule"/>
</dbReference>
<dbReference type="CDD" id="cd05401">
    <property type="entry name" value="NT_GlnE_GlnD_like"/>
    <property type="match status" value="2"/>
</dbReference>
<dbReference type="Gene3D" id="3.30.460.10">
    <property type="entry name" value="Beta Polymerase, domain 2"/>
    <property type="match status" value="2"/>
</dbReference>
<dbReference type="Gene3D" id="1.20.120.330">
    <property type="entry name" value="Nucleotidyltransferases domain 2"/>
    <property type="match status" value="2"/>
</dbReference>
<dbReference type="HAMAP" id="MF_00802">
    <property type="entry name" value="GlnE"/>
    <property type="match status" value="1"/>
</dbReference>
<dbReference type="InterPro" id="IPR023057">
    <property type="entry name" value="GlnE"/>
</dbReference>
<dbReference type="InterPro" id="IPR005190">
    <property type="entry name" value="GlnE_rpt_dom"/>
</dbReference>
<dbReference type="InterPro" id="IPR043519">
    <property type="entry name" value="NT_sf"/>
</dbReference>
<dbReference type="InterPro" id="IPR013546">
    <property type="entry name" value="PII_UdlTrfase/GS_AdlTrfase"/>
</dbReference>
<dbReference type="NCBIfam" id="NF010707">
    <property type="entry name" value="PRK14109.1"/>
    <property type="match status" value="1"/>
</dbReference>
<dbReference type="PANTHER" id="PTHR30621:SF0">
    <property type="entry name" value="BIFUNCTIONAL GLUTAMINE SYNTHETASE ADENYLYLTRANSFERASE_ADENYLYL-REMOVING ENZYME"/>
    <property type="match status" value="1"/>
</dbReference>
<dbReference type="PANTHER" id="PTHR30621">
    <property type="entry name" value="GLUTAMINE SYNTHETASE ADENYLYLTRANSFERASE"/>
    <property type="match status" value="1"/>
</dbReference>
<dbReference type="Pfam" id="PF08335">
    <property type="entry name" value="GlnD_UR_UTase"/>
    <property type="match status" value="2"/>
</dbReference>
<dbReference type="Pfam" id="PF03710">
    <property type="entry name" value="GlnE"/>
    <property type="match status" value="2"/>
</dbReference>
<dbReference type="SUPFAM" id="SSF81301">
    <property type="entry name" value="Nucleotidyltransferase"/>
    <property type="match status" value="2"/>
</dbReference>
<dbReference type="SUPFAM" id="SSF81593">
    <property type="entry name" value="Nucleotidyltransferase substrate binding subunit/domain"/>
    <property type="match status" value="2"/>
</dbReference>
<keyword id="KW-0067">ATP-binding</keyword>
<keyword id="KW-0460">Magnesium</keyword>
<keyword id="KW-0511">Multifunctional enzyme</keyword>
<keyword id="KW-0547">Nucleotide-binding</keyword>
<keyword id="KW-0548">Nucleotidyltransferase</keyword>
<keyword id="KW-1185">Reference proteome</keyword>
<keyword id="KW-0808">Transferase</keyword>
<proteinExistence type="inferred from homology"/>
<evidence type="ECO:0000255" key="1">
    <source>
        <dbReference type="HAMAP-Rule" id="MF_00802"/>
    </source>
</evidence>
<protein>
    <recommendedName>
        <fullName evidence="1">Bifunctional glutamine synthetase adenylyltransferase/adenylyl-removing enzyme</fullName>
    </recommendedName>
    <alternativeName>
        <fullName evidence="1">ATP:glutamine synthetase adenylyltransferase</fullName>
    </alternativeName>
    <alternativeName>
        <fullName evidence="1">ATase</fullName>
    </alternativeName>
    <domain>
        <recommendedName>
            <fullName evidence="1">Glutamine synthetase adenylyl-L-tyrosine phosphorylase</fullName>
            <ecNumber evidence="1">2.7.7.89</ecNumber>
        </recommendedName>
        <alternativeName>
            <fullName evidence="1">Adenylyl removase</fullName>
            <shortName evidence="1">AR</shortName>
            <shortName evidence="1">AT-N</shortName>
        </alternativeName>
    </domain>
    <domain>
        <recommendedName>
            <fullName evidence="1">Glutamine synthetase adenylyl transferase</fullName>
            <ecNumber evidence="1">2.7.7.42</ecNumber>
        </recommendedName>
        <alternativeName>
            <fullName evidence="1">Adenylyl transferase</fullName>
            <shortName evidence="1">AT</shortName>
            <shortName evidence="1">AT-C</shortName>
        </alternativeName>
    </domain>
</protein>
<sequence length="1004" mass="109461">MVRPPSARSAVPGVGRLGLLDPTAAASLRELGWDNVESIPVLWALSRAPDADLALNTLMRLREALGSDWQRLDSAIRTDTSLRGRLFALLGSSTALGDHLVAEPAAWEVLRRGDLPDRDELLADLLAAVQATPEAGPHAGPMLFRAGIAGPEAVALLRCRYRDQLMLLAALDLAATVENEPVLPYRVVGRHLTDLADAALTAALAVAVARVCKDQPCPVRLAVIAMGKCGARELNYVSDVDVVFVAEPADATATRLAAEMMSVGSQAFFEVDAALRPEGKQGALVRTLDSHLTYYKRWARTWEFQALLKNRPMTGDLELGREYRDAVMPMVWTASERPDFVPEVQGMRRRVEDLVPAELRERELKLGRGSLRDVEFAVQLLQLVHGRVDENLHVASTVDALSALAAGGYVGRDDAANLTASYEFLRLLEHRLQLQRLKRTHTLPADDDEEGMRWLARAAHIRPDGRQDAMGVLRSEIRRNAVRVRRLHAKLFYRPLLEAVVRMDPDALRLSPDAAVRQLAALGYAAPENAFGHLKALTGGVSRKGRIQALLLPTLLEWLGETPNPDAGLLAYRRVSEALDEQTWFLRELRDEGAVAQRLMIVLGSSEFLPDLLINAPETIRMFADGPHGPLLLGPQPEEVARGILTAAARYDDPNRAVAAARSLRRHELARVASADLLGMLEVPQVCRALSSVWVAVLDAALAAVIRAGEAESGEPAPAAFAVIGMGRLGGMELGYGSDADVLFVCEPRPGVDETKAVKWANTVAERVQRLLGAPSTDPPLHVDAGLRPEGRSGALVRTLSAYQAYYGQWAQSWEVQALLRAHQVAGDQELGVRFLHAVDKVRYPAGGVSEDAVREIRRIKARVDSERLPRGADPATHTKLGRGGLADIEWTVQLLQLRHAHEVESLHNTATLETLAAIEKAELLAAEDVALLRDSWLLATKARNALVLVRGKPSDQLPGPGRLLSAVATVAGWPNNDGGSEFLDHYLRITRRARAVVERVFGS</sequence>
<name>GLNE_NOCFA</name>
<organism>
    <name type="scientific">Nocardia farcinica (strain IFM 10152)</name>
    <dbReference type="NCBI Taxonomy" id="247156"/>
    <lineage>
        <taxon>Bacteria</taxon>
        <taxon>Bacillati</taxon>
        <taxon>Actinomycetota</taxon>
        <taxon>Actinomycetes</taxon>
        <taxon>Mycobacteriales</taxon>
        <taxon>Nocardiaceae</taxon>
        <taxon>Nocardia</taxon>
    </lineage>
</organism>
<gene>
    <name evidence="1" type="primary">glnE</name>
    <name type="ordered locus">NFA_16610</name>
</gene>
<comment type="function">
    <text evidence="1">Involved in the regulation of glutamine synthetase GlnA, a key enzyme in the process to assimilate ammonia. When cellular nitrogen levels are high, the C-terminal adenylyl transferase (AT) inactivates GlnA by covalent transfer of an adenylyl group from ATP to specific tyrosine residue of GlnA, thus reducing its activity. Conversely, when nitrogen levels are low, the N-terminal adenylyl removase (AR) activates GlnA by removing the adenylyl group by phosphorolysis, increasing its activity. The regulatory region of GlnE binds the signal transduction protein PII (GlnB) which indicates the nitrogen status of the cell.</text>
</comment>
<comment type="catalytic activity">
    <reaction evidence="1">
        <text>[glutamine synthetase]-O(4)-(5'-adenylyl)-L-tyrosine + phosphate = [glutamine synthetase]-L-tyrosine + ADP</text>
        <dbReference type="Rhea" id="RHEA:43716"/>
        <dbReference type="Rhea" id="RHEA-COMP:10660"/>
        <dbReference type="Rhea" id="RHEA-COMP:10661"/>
        <dbReference type="ChEBI" id="CHEBI:43474"/>
        <dbReference type="ChEBI" id="CHEBI:46858"/>
        <dbReference type="ChEBI" id="CHEBI:83624"/>
        <dbReference type="ChEBI" id="CHEBI:456216"/>
        <dbReference type="EC" id="2.7.7.89"/>
    </reaction>
</comment>
<comment type="catalytic activity">
    <reaction evidence="1">
        <text>[glutamine synthetase]-L-tyrosine + ATP = [glutamine synthetase]-O(4)-(5'-adenylyl)-L-tyrosine + diphosphate</text>
        <dbReference type="Rhea" id="RHEA:18589"/>
        <dbReference type="Rhea" id="RHEA-COMP:10660"/>
        <dbReference type="Rhea" id="RHEA-COMP:10661"/>
        <dbReference type="ChEBI" id="CHEBI:30616"/>
        <dbReference type="ChEBI" id="CHEBI:33019"/>
        <dbReference type="ChEBI" id="CHEBI:46858"/>
        <dbReference type="ChEBI" id="CHEBI:83624"/>
        <dbReference type="EC" id="2.7.7.42"/>
    </reaction>
</comment>
<comment type="cofactor">
    <cofactor evidence="1">
        <name>Mg(2+)</name>
        <dbReference type="ChEBI" id="CHEBI:18420"/>
    </cofactor>
</comment>
<comment type="similarity">
    <text evidence="1">Belongs to the GlnE family.</text>
</comment>
<feature type="chain" id="PRO_0000209261" description="Bifunctional glutamine synthetase adenylyltransferase/adenylyl-removing enzyme">
    <location>
        <begin position="1"/>
        <end position="1004"/>
    </location>
</feature>
<feature type="region of interest" description="Adenylyl removase" evidence="1">
    <location>
        <begin position="1"/>
        <end position="496"/>
    </location>
</feature>
<feature type="region of interest" description="Adenylyl transferase" evidence="1">
    <location>
        <begin position="502"/>
        <end position="1004"/>
    </location>
</feature>
<reference key="1">
    <citation type="journal article" date="2004" name="Proc. Natl. Acad. Sci. U.S.A.">
        <title>The complete genomic sequence of Nocardia farcinica IFM 10152.</title>
        <authorList>
            <person name="Ishikawa J."/>
            <person name="Yamashita A."/>
            <person name="Mikami Y."/>
            <person name="Hoshino Y."/>
            <person name="Kurita H."/>
            <person name="Hotta K."/>
            <person name="Shiba T."/>
            <person name="Hattori M."/>
        </authorList>
    </citation>
    <scope>NUCLEOTIDE SEQUENCE [LARGE SCALE GENOMIC DNA]</scope>
    <source>
        <strain>IFM 10152</strain>
    </source>
</reference>
<accession>Q5YZ84</accession>